<feature type="chain" id="PRO_1000055823" description="Large ribosomal subunit protein bL17">
    <location>
        <begin position="1"/>
        <end position="140"/>
    </location>
</feature>
<feature type="region of interest" description="Disordered" evidence="2">
    <location>
        <begin position="120"/>
        <end position="140"/>
    </location>
</feature>
<accession>Q2N9D8</accession>
<keyword id="KW-1185">Reference proteome</keyword>
<keyword id="KW-0687">Ribonucleoprotein</keyword>
<keyword id="KW-0689">Ribosomal protein</keyword>
<gene>
    <name evidence="1" type="primary">rplQ</name>
    <name type="ordered locus">ELI_08055</name>
</gene>
<evidence type="ECO:0000255" key="1">
    <source>
        <dbReference type="HAMAP-Rule" id="MF_01368"/>
    </source>
</evidence>
<evidence type="ECO:0000256" key="2">
    <source>
        <dbReference type="SAM" id="MobiDB-lite"/>
    </source>
</evidence>
<evidence type="ECO:0000305" key="3"/>
<sequence length="140" mass="15801">MRHGISQRKLSRKSGHRKALFRNMSAALIKHEQIVTTLPKAKELRPYVEKLITLAKRGGLSNRRLAMGRLQDETQLKKLFDELADRYSDRDGGYTRIVKAGYRASDSAQLAVIELVDRDEDAKGQDSGPVMVDEDDFAEA</sequence>
<proteinExistence type="inferred from homology"/>
<comment type="subunit">
    <text evidence="1">Part of the 50S ribosomal subunit. Contacts protein L32.</text>
</comment>
<comment type="similarity">
    <text evidence="1">Belongs to the bacterial ribosomal protein bL17 family.</text>
</comment>
<name>RL17_ERYLH</name>
<organism>
    <name type="scientific">Erythrobacter litoralis (strain HTCC2594)</name>
    <dbReference type="NCBI Taxonomy" id="314225"/>
    <lineage>
        <taxon>Bacteria</taxon>
        <taxon>Pseudomonadati</taxon>
        <taxon>Pseudomonadota</taxon>
        <taxon>Alphaproteobacteria</taxon>
        <taxon>Sphingomonadales</taxon>
        <taxon>Erythrobacteraceae</taxon>
        <taxon>Erythrobacter/Porphyrobacter group</taxon>
        <taxon>Erythrobacter</taxon>
    </lineage>
</organism>
<reference key="1">
    <citation type="journal article" date="2009" name="J. Bacteriol.">
        <title>Complete genome sequence of Erythrobacter litoralis HTCC2594.</title>
        <authorList>
            <person name="Oh H.M."/>
            <person name="Giovannoni S.J."/>
            <person name="Ferriera S."/>
            <person name="Johnson J."/>
            <person name="Cho J.C."/>
        </authorList>
    </citation>
    <scope>NUCLEOTIDE SEQUENCE [LARGE SCALE GENOMIC DNA]</scope>
    <source>
        <strain>HTCC2594</strain>
    </source>
</reference>
<protein>
    <recommendedName>
        <fullName evidence="1">Large ribosomal subunit protein bL17</fullName>
    </recommendedName>
    <alternativeName>
        <fullName evidence="3">50S ribosomal protein L17</fullName>
    </alternativeName>
</protein>
<dbReference type="EMBL" id="CP000157">
    <property type="protein sequence ID" value="ABC63703.1"/>
    <property type="molecule type" value="Genomic_DNA"/>
</dbReference>
<dbReference type="RefSeq" id="WP_011414535.1">
    <property type="nucleotide sequence ID" value="NC_007722.1"/>
</dbReference>
<dbReference type="SMR" id="Q2N9D8"/>
<dbReference type="STRING" id="314225.ELI_08055"/>
<dbReference type="KEGG" id="eli:ELI_08055"/>
<dbReference type="eggNOG" id="COG0203">
    <property type="taxonomic scope" value="Bacteria"/>
</dbReference>
<dbReference type="HOGENOM" id="CLU_074407_2_0_5"/>
<dbReference type="OrthoDB" id="9809073at2"/>
<dbReference type="Proteomes" id="UP000008808">
    <property type="component" value="Chromosome"/>
</dbReference>
<dbReference type="GO" id="GO:0022625">
    <property type="term" value="C:cytosolic large ribosomal subunit"/>
    <property type="evidence" value="ECO:0007669"/>
    <property type="project" value="TreeGrafter"/>
</dbReference>
<dbReference type="GO" id="GO:0003735">
    <property type="term" value="F:structural constituent of ribosome"/>
    <property type="evidence" value="ECO:0007669"/>
    <property type="project" value="InterPro"/>
</dbReference>
<dbReference type="GO" id="GO:0006412">
    <property type="term" value="P:translation"/>
    <property type="evidence" value="ECO:0007669"/>
    <property type="project" value="UniProtKB-UniRule"/>
</dbReference>
<dbReference type="FunFam" id="3.90.1030.10:FF:000001">
    <property type="entry name" value="50S ribosomal protein L17"/>
    <property type="match status" value="1"/>
</dbReference>
<dbReference type="Gene3D" id="3.90.1030.10">
    <property type="entry name" value="Ribosomal protein L17"/>
    <property type="match status" value="1"/>
</dbReference>
<dbReference type="HAMAP" id="MF_01368">
    <property type="entry name" value="Ribosomal_bL17"/>
    <property type="match status" value="1"/>
</dbReference>
<dbReference type="InterPro" id="IPR000456">
    <property type="entry name" value="Ribosomal_bL17"/>
</dbReference>
<dbReference type="InterPro" id="IPR047859">
    <property type="entry name" value="Ribosomal_bL17_CS"/>
</dbReference>
<dbReference type="InterPro" id="IPR036373">
    <property type="entry name" value="Ribosomal_bL17_sf"/>
</dbReference>
<dbReference type="NCBIfam" id="TIGR00059">
    <property type="entry name" value="L17"/>
    <property type="match status" value="1"/>
</dbReference>
<dbReference type="PANTHER" id="PTHR14413:SF16">
    <property type="entry name" value="LARGE RIBOSOMAL SUBUNIT PROTEIN BL17M"/>
    <property type="match status" value="1"/>
</dbReference>
<dbReference type="PANTHER" id="PTHR14413">
    <property type="entry name" value="RIBOSOMAL PROTEIN L17"/>
    <property type="match status" value="1"/>
</dbReference>
<dbReference type="Pfam" id="PF01196">
    <property type="entry name" value="Ribosomal_L17"/>
    <property type="match status" value="1"/>
</dbReference>
<dbReference type="SUPFAM" id="SSF64263">
    <property type="entry name" value="Prokaryotic ribosomal protein L17"/>
    <property type="match status" value="1"/>
</dbReference>
<dbReference type="PROSITE" id="PS01167">
    <property type="entry name" value="RIBOSOMAL_L17"/>
    <property type="match status" value="1"/>
</dbReference>